<keyword id="KW-0325">Glycoprotein</keyword>
<keyword id="KW-0426">Late protein</keyword>
<keyword id="KW-0946">Virion</keyword>
<evidence type="ECO:0000250" key="1">
    <source>
        <dbReference type="UniProtKB" id="P27942"/>
    </source>
</evidence>
<evidence type="ECO:0000255" key="2"/>
<evidence type="ECO:0000305" key="3"/>
<sequence>MWKVNDQGFLNISVTGTKFNLIATTGKLGFYTDPPSHLIVIPLKIFPVHKFSKNEPNKKQKRFIYF</sequence>
<feature type="chain" id="PRO_0000373566" description="Protein I177L">
    <location>
        <begin position="1"/>
        <end position="66"/>
    </location>
</feature>
<feature type="glycosylation site" description="N-linked (GlcNAc...) asparagine; by host" evidence="2">
    <location>
        <position position="11"/>
    </location>
</feature>
<reference key="1">
    <citation type="submission" date="2003-03" db="EMBL/GenBank/DDBJ databases">
        <title>African swine fever virus genomes.</title>
        <authorList>
            <person name="Kutish G.F."/>
            <person name="Rock D.L."/>
        </authorList>
    </citation>
    <scope>NUCLEOTIDE SEQUENCE [LARGE SCALE GENOMIC DNA]</scope>
</reference>
<dbReference type="EMBL" id="AY261366">
    <property type="status" value="NOT_ANNOTATED_CDS"/>
    <property type="molecule type" value="Genomic_DNA"/>
</dbReference>
<dbReference type="Proteomes" id="UP000000858">
    <property type="component" value="Segment"/>
</dbReference>
<dbReference type="GO" id="GO:0044423">
    <property type="term" value="C:virion component"/>
    <property type="evidence" value="ECO:0007669"/>
    <property type="project" value="UniProtKB-KW"/>
</dbReference>
<name>VF177_ASFWA</name>
<proteinExistence type="inferred from homology"/>
<comment type="subcellular location">
    <subcellularLocation>
        <location evidence="1">Virion</location>
    </subcellularLocation>
</comment>
<comment type="induction">
    <text evidence="1">Expressed in the late phase of the viral replicative cycle.</text>
</comment>
<comment type="similarity">
    <text evidence="3">Belongs to the asfivirus I177L family.</text>
</comment>
<organismHost>
    <name type="scientific">Ornithodoros</name>
    <name type="common">relapsing fever ticks</name>
    <dbReference type="NCBI Taxonomy" id="6937"/>
</organismHost>
<organismHost>
    <name type="scientific">Phacochoerus aethiopicus</name>
    <name type="common">Warthog</name>
    <dbReference type="NCBI Taxonomy" id="85517"/>
</organismHost>
<organismHost>
    <name type="scientific">Phacochoerus africanus</name>
    <name type="common">Warthog</name>
    <dbReference type="NCBI Taxonomy" id="41426"/>
</organismHost>
<organismHost>
    <name type="scientific">Potamochoerus larvatus</name>
    <name type="common">Bushpig</name>
    <dbReference type="NCBI Taxonomy" id="273792"/>
</organismHost>
<organismHost>
    <name type="scientific">Sus scrofa</name>
    <name type="common">Pig</name>
    <dbReference type="NCBI Taxonomy" id="9823"/>
</organismHost>
<gene>
    <name type="ordered locus">War-155</name>
</gene>
<accession>P0CA83</accession>
<organism>
    <name type="scientific">African swine fever virus (isolate Warthog/Namibia/Wart80/1980)</name>
    <name type="common">ASFV</name>
    <dbReference type="NCBI Taxonomy" id="561444"/>
    <lineage>
        <taxon>Viruses</taxon>
        <taxon>Varidnaviria</taxon>
        <taxon>Bamfordvirae</taxon>
        <taxon>Nucleocytoviricota</taxon>
        <taxon>Pokkesviricetes</taxon>
        <taxon>Asfuvirales</taxon>
        <taxon>Asfarviridae</taxon>
        <taxon>Asfivirus</taxon>
        <taxon>African swine fever virus</taxon>
    </lineage>
</organism>
<protein>
    <recommendedName>
        <fullName>Protein I177L</fullName>
    </recommendedName>
</protein>